<name>MDAB_ECO57</name>
<gene>
    <name evidence="4" type="primary">mdaB</name>
    <name type="ordered locus">Z4379</name>
    <name type="ordered locus">ECs3910</name>
</gene>
<keyword id="KW-0002">3D-structure</keyword>
<keyword id="KW-0963">Cytoplasm</keyword>
<keyword id="KW-0274">FAD</keyword>
<keyword id="KW-0285">Flavoprotein</keyword>
<keyword id="KW-0560">Oxidoreductase</keyword>
<keyword id="KW-1185">Reference proteome</keyword>
<protein>
    <recommendedName>
        <fullName evidence="5">NADPH:quinone oxidoreductase MdaB</fullName>
        <ecNumber evidence="1">1.6.5.10</ecNumber>
    </recommendedName>
    <alternativeName>
        <fullName evidence="4">Modulator of drug activity B</fullName>
    </alternativeName>
</protein>
<dbReference type="EC" id="1.6.5.10" evidence="1"/>
<dbReference type="EMBL" id="AE005174">
    <property type="protein sequence ID" value="AAG58161.1"/>
    <property type="molecule type" value="Genomic_DNA"/>
</dbReference>
<dbReference type="EMBL" id="BA000007">
    <property type="protein sequence ID" value="BAB37333.1"/>
    <property type="molecule type" value="Genomic_DNA"/>
</dbReference>
<dbReference type="PIR" id="E85962">
    <property type="entry name" value="E85962"/>
</dbReference>
<dbReference type="PIR" id="F91117">
    <property type="entry name" value="F91117"/>
</dbReference>
<dbReference type="RefSeq" id="NP_311937.1">
    <property type="nucleotide sequence ID" value="NC_002695.1"/>
</dbReference>
<dbReference type="RefSeq" id="WP_000065430.1">
    <property type="nucleotide sequence ID" value="NZ_VOAI01000009.1"/>
</dbReference>
<dbReference type="PDB" id="2AMJ">
    <property type="method" value="X-ray"/>
    <property type="resolution" value="1.80 A"/>
    <property type="chains" value="A/B/C/D=2-193"/>
</dbReference>
<dbReference type="PDB" id="2B3D">
    <property type="method" value="X-ray"/>
    <property type="resolution" value="2.10 A"/>
    <property type="chains" value="A/B=2-193"/>
</dbReference>
<dbReference type="PDBsum" id="2AMJ"/>
<dbReference type="PDBsum" id="2B3D"/>
<dbReference type="SMR" id="P0AEY7"/>
<dbReference type="STRING" id="155864.Z4379"/>
<dbReference type="GeneID" id="86861166"/>
<dbReference type="GeneID" id="916264"/>
<dbReference type="KEGG" id="ece:Z4379"/>
<dbReference type="KEGG" id="ecs:ECs_3910"/>
<dbReference type="PATRIC" id="fig|386585.9.peg.4078"/>
<dbReference type="eggNOG" id="COG2249">
    <property type="taxonomic scope" value="Bacteria"/>
</dbReference>
<dbReference type="HOGENOM" id="CLU_083846_0_0_6"/>
<dbReference type="OMA" id="PTFICND"/>
<dbReference type="EvolutionaryTrace" id="P0AEY7"/>
<dbReference type="Proteomes" id="UP000000558">
    <property type="component" value="Chromosome"/>
</dbReference>
<dbReference type="Proteomes" id="UP000002519">
    <property type="component" value="Chromosome"/>
</dbReference>
<dbReference type="GO" id="GO:0005737">
    <property type="term" value="C:cytoplasm"/>
    <property type="evidence" value="ECO:0007669"/>
    <property type="project" value="UniProtKB-SubCell"/>
</dbReference>
<dbReference type="GO" id="GO:0008753">
    <property type="term" value="F:NADPH dehydrogenase (quinone) activity"/>
    <property type="evidence" value="ECO:0007669"/>
    <property type="project" value="UniProtKB-EC"/>
</dbReference>
<dbReference type="FunFam" id="3.40.50.360:FF:000007">
    <property type="entry name" value="Drug activity modulator B"/>
    <property type="match status" value="1"/>
</dbReference>
<dbReference type="Gene3D" id="3.40.50.360">
    <property type="match status" value="1"/>
</dbReference>
<dbReference type="InterPro" id="IPR003680">
    <property type="entry name" value="Flavodoxin_fold"/>
</dbReference>
<dbReference type="InterPro" id="IPR029039">
    <property type="entry name" value="Flavoprotein-like_sf"/>
</dbReference>
<dbReference type="InterPro" id="IPR052397">
    <property type="entry name" value="NADPH-QR_MdaB"/>
</dbReference>
<dbReference type="PANTHER" id="PTHR46305">
    <property type="match status" value="1"/>
</dbReference>
<dbReference type="PANTHER" id="PTHR46305:SF3">
    <property type="entry name" value="NADPH:QUINONE OXIDOREDUCTASE MDAB"/>
    <property type="match status" value="1"/>
</dbReference>
<dbReference type="Pfam" id="PF02525">
    <property type="entry name" value="Flavodoxin_2"/>
    <property type="match status" value="1"/>
</dbReference>
<dbReference type="SUPFAM" id="SSF52218">
    <property type="entry name" value="Flavoproteins"/>
    <property type="match status" value="1"/>
</dbReference>
<feature type="initiator methionine" description="Removed" evidence="1">
    <location>
        <position position="1"/>
    </location>
</feature>
<feature type="chain" id="PRO_0000096314" description="NADPH:quinone oxidoreductase MdaB">
    <location>
        <begin position="2"/>
        <end position="193"/>
    </location>
</feature>
<feature type="binding site" evidence="3 6">
    <location>
        <begin position="16"/>
        <end position="23"/>
    </location>
    <ligand>
        <name>FAD</name>
        <dbReference type="ChEBI" id="CHEBI:57692"/>
    </ligand>
</feature>
<feature type="binding site" evidence="3 6">
    <location>
        <begin position="69"/>
        <end position="72"/>
    </location>
    <ligand>
        <name>FAD</name>
        <dbReference type="ChEBI" id="CHEBI:57692"/>
    </ligand>
</feature>
<feature type="binding site" evidence="3 6">
    <location>
        <position position="108"/>
    </location>
    <ligand>
        <name>FAD</name>
        <dbReference type="ChEBI" id="CHEBI:57692"/>
    </ligand>
</feature>
<feature type="binding site" evidence="3 6">
    <location>
        <begin position="124"/>
        <end position="127"/>
    </location>
    <ligand>
        <name>FAD</name>
        <dbReference type="ChEBI" id="CHEBI:57692"/>
    </ligand>
</feature>
<feature type="strand" evidence="7">
    <location>
        <begin position="3"/>
        <end position="8"/>
    </location>
</feature>
<feature type="helix" evidence="7">
    <location>
        <begin position="19"/>
        <end position="34"/>
    </location>
</feature>
<feature type="strand" evidence="7">
    <location>
        <begin position="38"/>
        <end position="46"/>
    </location>
</feature>
<feature type="helix" evidence="7">
    <location>
        <begin position="50"/>
        <end position="59"/>
    </location>
</feature>
<feature type="strand" evidence="7">
    <location>
        <begin position="61"/>
        <end position="68"/>
    </location>
</feature>
<feature type="helix" evidence="7">
    <location>
        <begin position="76"/>
        <end position="88"/>
    </location>
</feature>
<feature type="turn" evidence="7">
    <location>
        <begin position="89"/>
        <end position="92"/>
    </location>
</feature>
<feature type="strand" evidence="7">
    <location>
        <begin position="93"/>
        <end position="97"/>
    </location>
</feature>
<feature type="strand" evidence="7">
    <location>
        <begin position="118"/>
        <end position="124"/>
    </location>
</feature>
<feature type="helix" evidence="7">
    <location>
        <begin position="130"/>
        <end position="133"/>
    </location>
</feature>
<feature type="strand" evidence="7">
    <location>
        <begin position="137"/>
        <end position="139"/>
    </location>
</feature>
<feature type="helix" evidence="7">
    <location>
        <begin position="144"/>
        <end position="147"/>
    </location>
</feature>
<feature type="helix" evidence="7">
    <location>
        <begin position="149"/>
        <end position="157"/>
    </location>
</feature>
<feature type="strand" evidence="7">
    <location>
        <begin position="166"/>
        <end position="168"/>
    </location>
</feature>
<feature type="turn" evidence="7">
    <location>
        <begin position="171"/>
        <end position="173"/>
    </location>
</feature>
<feature type="turn" evidence="7">
    <location>
        <begin position="177"/>
        <end position="179"/>
    </location>
</feature>
<feature type="helix" evidence="7">
    <location>
        <begin position="180"/>
        <end position="192"/>
    </location>
</feature>
<comment type="function">
    <text evidence="1">NADPH-specific quinone reductase.</text>
</comment>
<comment type="catalytic activity">
    <reaction evidence="1">
        <text>a quinone + NADPH + H(+) = a quinol + NADP(+)</text>
        <dbReference type="Rhea" id="RHEA:46164"/>
        <dbReference type="ChEBI" id="CHEBI:15378"/>
        <dbReference type="ChEBI" id="CHEBI:24646"/>
        <dbReference type="ChEBI" id="CHEBI:57783"/>
        <dbReference type="ChEBI" id="CHEBI:58349"/>
        <dbReference type="ChEBI" id="CHEBI:132124"/>
        <dbReference type="EC" id="1.6.5.10"/>
    </reaction>
</comment>
<comment type="cofactor">
    <cofactor evidence="3">
        <name>FAD</name>
        <dbReference type="ChEBI" id="CHEBI:57692"/>
    </cofactor>
</comment>
<comment type="subunit">
    <text evidence="2 3">Homodimer.</text>
</comment>
<comment type="subcellular location">
    <subcellularLocation>
        <location evidence="1">Cytoplasm</location>
    </subcellularLocation>
</comment>
<comment type="similarity">
    <text evidence="5">Belongs to the oxidoreductase MdaB family.</text>
</comment>
<proteinExistence type="evidence at protein level"/>
<sequence>MSNILIINGAKKFAHSNGQLNDTLTEVADGTLRDLGHDVRIVRADSDYDVKAEVQNFLWADVVIWQMPGWWMGAPWTVKKYIDDVFTEGHGTLYASDGRTRKDPSKKYGSGGLVQGKKYMLSLTWNAPMEAFTEKDQFFHGVGVDGVYLPFHKANQFLGMEPLPTFIANDVIKMPDVPRYTEEYRKHLVEIFG</sequence>
<accession>P0AEY7</accession>
<accession>P40717</accession>
<organism>
    <name type="scientific">Escherichia coli O157:H7</name>
    <dbReference type="NCBI Taxonomy" id="83334"/>
    <lineage>
        <taxon>Bacteria</taxon>
        <taxon>Pseudomonadati</taxon>
        <taxon>Pseudomonadota</taxon>
        <taxon>Gammaproteobacteria</taxon>
        <taxon>Enterobacterales</taxon>
        <taxon>Enterobacteriaceae</taxon>
        <taxon>Escherichia</taxon>
    </lineage>
</organism>
<evidence type="ECO:0000250" key="1">
    <source>
        <dbReference type="UniProtKB" id="P0AEY5"/>
    </source>
</evidence>
<evidence type="ECO:0000269" key="2">
    <source>
    </source>
</evidence>
<evidence type="ECO:0000269" key="3">
    <source>
    </source>
</evidence>
<evidence type="ECO:0000303" key="4">
    <source>
    </source>
</evidence>
<evidence type="ECO:0000305" key="5"/>
<evidence type="ECO:0007744" key="6">
    <source>
        <dbReference type="PDB" id="2B3D"/>
    </source>
</evidence>
<evidence type="ECO:0007829" key="7">
    <source>
        <dbReference type="PDB" id="2AMJ"/>
    </source>
</evidence>
<reference key="1">
    <citation type="journal article" date="2001" name="Nature">
        <title>Genome sequence of enterohaemorrhagic Escherichia coli O157:H7.</title>
        <authorList>
            <person name="Perna N.T."/>
            <person name="Plunkett G. III"/>
            <person name="Burland V."/>
            <person name="Mau B."/>
            <person name="Glasner J.D."/>
            <person name="Rose D.J."/>
            <person name="Mayhew G.F."/>
            <person name="Evans P.S."/>
            <person name="Gregor J."/>
            <person name="Kirkpatrick H.A."/>
            <person name="Posfai G."/>
            <person name="Hackett J."/>
            <person name="Klink S."/>
            <person name="Boutin A."/>
            <person name="Shao Y."/>
            <person name="Miller L."/>
            <person name="Grotbeck E.J."/>
            <person name="Davis N.W."/>
            <person name="Lim A."/>
            <person name="Dimalanta E.T."/>
            <person name="Potamousis K."/>
            <person name="Apodaca J."/>
            <person name="Anantharaman T.S."/>
            <person name="Lin J."/>
            <person name="Yen G."/>
            <person name="Schwartz D.C."/>
            <person name="Welch R.A."/>
            <person name="Blattner F.R."/>
        </authorList>
    </citation>
    <scope>NUCLEOTIDE SEQUENCE [LARGE SCALE GENOMIC DNA]</scope>
    <source>
        <strain>O157:H7 / EDL933 / ATCC 700927 / EHEC</strain>
    </source>
</reference>
<reference key="2">
    <citation type="journal article" date="2001" name="DNA Res.">
        <title>Complete genome sequence of enterohemorrhagic Escherichia coli O157:H7 and genomic comparison with a laboratory strain K-12.</title>
        <authorList>
            <person name="Hayashi T."/>
            <person name="Makino K."/>
            <person name="Ohnishi M."/>
            <person name="Kurokawa K."/>
            <person name="Ishii K."/>
            <person name="Yokoyama K."/>
            <person name="Han C.-G."/>
            <person name="Ohtsubo E."/>
            <person name="Nakayama K."/>
            <person name="Murata T."/>
            <person name="Tanaka M."/>
            <person name="Tobe T."/>
            <person name="Iida T."/>
            <person name="Takami H."/>
            <person name="Honda T."/>
            <person name="Sasakawa C."/>
            <person name="Ogasawara N."/>
            <person name="Yasunaga T."/>
            <person name="Kuhara S."/>
            <person name="Shiba T."/>
            <person name="Hattori M."/>
            <person name="Shinagawa H."/>
        </authorList>
    </citation>
    <scope>NUCLEOTIDE SEQUENCE [LARGE SCALE GENOMIC DNA]</scope>
    <source>
        <strain>O157:H7 / Sakai / RIMD 0509952 / EHEC</strain>
    </source>
</reference>
<reference key="3">
    <citation type="journal article" date="2005" name="Acta Crystallogr. F">
        <title>MdaB from Escherichia coli: cloning, purification, crystallization and preliminary X-ray analysis.</title>
        <authorList>
            <person name="Adams M.A."/>
            <person name="Iannuzzi P."/>
            <person name="Jia Z."/>
        </authorList>
    </citation>
    <scope>SUBUNIT</scope>
    <scope>CRYSTALLIZATION</scope>
    <source>
        <strain>O157:H7 / EDL933 / ATCC 700927 / EHEC</strain>
    </source>
</reference>
<reference evidence="6" key="4">
    <citation type="journal article" date="2006" name="J. Mol. Biol.">
        <title>Modulator of drug activity B from Escherichia coli: crystal structure of a prokaryotic homologue of DT-diaphorase.</title>
        <authorList>
            <person name="Adams M.A."/>
            <person name="Jia Z."/>
        </authorList>
    </citation>
    <scope>X-RAY CRYSTALLOGRAPHY (2.10 ANGSTROMS) OF 2-193 OF APOENZYME AND IN COMPLEX WITH FAD</scope>
    <scope>COFACTOR</scope>
    <scope>SUBUNIT</scope>
</reference>